<proteinExistence type="inferred from homology"/>
<gene>
    <name evidence="7" type="primary">M8</name>
</gene>
<comment type="function">
    <text evidence="1 3 4 5 6 9">Probable carboxylesterase; part of the gene cluster that mediates the biosynthesis of squalestatin S1 (SQS1, also known as zaragozic acid A), a heavily oxidized fungal polyketide that offers potent cholesterol lowering activity by targeting squalene synthase (SS) (PubMed:27056201). SQS1 is composed of a 2,8-dioxobicyclic[3.2.1]octane-3,4,5-tricarboxyclic acid core that is connected to two lipophilic polyketide arms (PubMed:27056201). These initial steps feature the priming of an unusual benzoic acid starter unit onto the highly reducing polyketide synthase pks2, followed by oxaloacetate extension and product release to generate a tricarboxylic acid containing product (By similarity). The phenylalanine ammonia lyase (PAL) M7 and the acyl-CoA ligase M9 are involved in transforming phenylalanine into benzoyl-CoA (By similarity). The citrate synthase-like protein R3 is involved in connecting the C-alpha-carbons of the hexaketide chain and oxaloacetate to afford the tricarboxylic acid unit (By similarity). The potential hydrolytic enzymes, M8 and M10, are in close proximity to pks2 and may participate in product release (By similarity). On the other side, the tetraketide arm is synthesized by a the squalestatin tetraketide synthase pks1 and enzymatically esterified to the core in the last biosynthetic step, by the acetyltransferase M4 (PubMed:11251290, PubMed:15489970, PubMed:28106181). The biosynthesis of the tetraketide must involve 3 rounds of chain extension (PubMed:11251290, PubMed:15489970, PubMed:28106181). After the first and second rounds methyl-transfer occurs, and in all rounds of extension the ketoreductase and dehydratase are active (PubMed:11251290, PubMed:15489970, PubMed:28106181). The enoyl reductase and C-MeT of pks1 are not active in the final round of extension (PubMed:11251290, PubMed:15489970, PubMed:28106181). The acetyltransferase M4 appears to have a broad substrate selectivity for its acyl CoA substrate, allowing the in vitro synthesis of novel squalestatins (Probable). The biosynthesis of SQS1 requires several oxidative steps likely performed by oxidoreductases M1, R1 and R2 (Probable). Finally, in support of the identification of the cluster as being responsible for SQS1 production, the cluster contains a gene encoding a putative squalene synthase (SS) R6, suggesting a likely mechanism for self-resistance (Probable).</text>
</comment>
<comment type="catalytic activity">
    <reaction evidence="8">
        <text>a carboxylic ester + H2O = an alcohol + a carboxylate + H(+)</text>
        <dbReference type="Rhea" id="RHEA:21164"/>
        <dbReference type="ChEBI" id="CHEBI:15377"/>
        <dbReference type="ChEBI" id="CHEBI:15378"/>
        <dbReference type="ChEBI" id="CHEBI:29067"/>
        <dbReference type="ChEBI" id="CHEBI:30879"/>
        <dbReference type="ChEBI" id="CHEBI:33308"/>
        <dbReference type="EC" id="3.1.1.1"/>
    </reaction>
</comment>
<comment type="pathway">
    <text evidence="9">Secondary metabolite biosynthesis.</text>
</comment>
<comment type="similarity">
    <text evidence="8">Belongs to the 'GDXG' lipolytic enzyme family.</text>
</comment>
<organism>
    <name type="scientific">Phoma sp. (strain ATCC 20986 / MF5453)</name>
    <dbReference type="NCBI Taxonomy" id="1828523"/>
    <lineage>
        <taxon>Eukaryota</taxon>
        <taxon>Fungi</taxon>
        <taxon>Dikarya</taxon>
        <taxon>Ascomycota</taxon>
        <taxon>Pezizomycotina</taxon>
        <taxon>Dothideomycetes</taxon>
        <taxon>Pleosporomycetidae</taxon>
        <taxon>Pleosporales</taxon>
        <taxon>Pleosporineae</taxon>
        <taxon>Didymellaceae</taxon>
        <taxon>Phoma</taxon>
    </lineage>
</organism>
<name>MFM8_PHOSM</name>
<evidence type="ECO:0000250" key="1">
    <source>
        <dbReference type="UniProtKB" id="A0A345BJN2"/>
    </source>
</evidence>
<evidence type="ECO:0000250" key="2">
    <source>
        <dbReference type="UniProtKB" id="Q5NUF3"/>
    </source>
</evidence>
<evidence type="ECO:0000269" key="3">
    <source>
    </source>
</evidence>
<evidence type="ECO:0000269" key="4">
    <source>
    </source>
</evidence>
<evidence type="ECO:0000269" key="5">
    <source>
    </source>
</evidence>
<evidence type="ECO:0000269" key="6">
    <source>
    </source>
</evidence>
<evidence type="ECO:0000303" key="7">
    <source>
    </source>
</evidence>
<evidence type="ECO:0000305" key="8"/>
<evidence type="ECO:0000305" key="9">
    <source>
    </source>
</evidence>
<keyword id="KW-0378">Hydrolase</keyword>
<protein>
    <recommendedName>
        <fullName evidence="7">Probable carboxylesterase M8</fullName>
        <ecNumber evidence="8">3.1.1.1</ecNumber>
    </recommendedName>
    <alternativeName>
        <fullName evidence="7">Squalestatin S1 biosynthesis cluster protein M8</fullName>
    </alternativeName>
</protein>
<feature type="chain" id="PRO_0000447837" description="Probable carboxylesterase M8">
    <location>
        <begin position="1"/>
        <end position="320"/>
    </location>
</feature>
<feature type="short sequence motif" description="Involved in the stabilization of the negatively charged intermediate by the formation of the oxyanion hole" evidence="2">
    <location>
        <begin position="52"/>
        <end position="54"/>
    </location>
</feature>
<feature type="active site" evidence="2">
    <location>
        <position position="137"/>
    </location>
</feature>
<feature type="active site" evidence="2">
    <location>
        <position position="296"/>
    </location>
</feature>
<reference key="1">
    <citation type="journal article" date="2016" name="Chem. Commun. (Camb.)">
        <title>Identification of genes encoding squalestatin S1 biosynthesis and in vitro production of new squalestatin analogues.</title>
        <authorList>
            <person name="Bonsch B."/>
            <person name="Belt V."/>
            <person name="Bartel C."/>
            <person name="Duensing N."/>
            <person name="Koziol M."/>
            <person name="Lazarus C.M."/>
            <person name="Bailey A.M."/>
            <person name="Simpson T.J."/>
            <person name="Cox R.J."/>
        </authorList>
    </citation>
    <scope>NUCLEOTIDE SEQUENCE [GENOMIC DNA]</scope>
    <scope>FUNCTION</scope>
</reference>
<reference key="2">
    <citation type="journal article" date="2001" name="Chem. Biol.">
        <title>Design and utility of oligonucleotide gene probes for fungal polyketide synthases.</title>
        <authorList>
            <person name="Nicholson T.P."/>
            <person name="Rudd B.A."/>
            <person name="Dawson M."/>
            <person name="Lazarus C.M."/>
            <person name="Simpson T.J."/>
            <person name="Cox R.J."/>
        </authorList>
    </citation>
    <scope>FUNCTION</scope>
</reference>
<reference key="3">
    <citation type="journal article" date="2004" name="Chem. Commun. (Camb.)">
        <title>Rapid cloning and expression of a fungal polyketide synthase gene involved in squalestatin biosynthesis.</title>
        <authorList>
            <person name="Cox R.J."/>
            <person name="Glod F."/>
            <person name="Hurley D."/>
            <person name="Lazarus C.M."/>
            <person name="Nicholson T.P."/>
            <person name="Rudd B.A."/>
            <person name="Simpson T.J."/>
            <person name="Wilkinson B."/>
            <person name="Zhang Y."/>
        </authorList>
    </citation>
    <scope>FUNCTION</scope>
</reference>
<reference key="4">
    <citation type="journal article" date="2017" name="Chem. Commun. (Camb.)">
        <title>In vitro kinetic study of the squalestatin tetraketide synthase dehydratase reveals the stereochemical course of a fungal highly reducing polyketide synthase.</title>
        <authorList>
            <person name="Liddle E."/>
            <person name="Scott A."/>
            <person name="Han L.C."/>
            <person name="Ivison D."/>
            <person name="Simpson T.J."/>
            <person name="Willis C.L."/>
            <person name="Cox R.J."/>
        </authorList>
    </citation>
    <scope>FUNCTION</scope>
</reference>
<sequence length="320" mass="36010">MDFPGNSRFASFVRADFEYSRVEDHPLIASVLSPRKAEESAQRQSPVLVFWHGGGFVVGGRLYEPWWSEWLIEYALSQDAIIVAPDYRLLPEATGADIFDDVEAFWIWLHKSLPSLAQSNSWHAKPDLTRILCVGQSGGGSMAVHSALLHPEFNIKAIVSLYAPLYHNVPNLTVPRPRRILGTMPPPPRKAEGLIRSYIKQSKGSVRTGGDPLDMWELLLCLLQQGRLISLMNLKPDSRLDTPSLLRQVGKLPPLWLIHGEDDSVIPFKCSEMFLDELRVIAPSTSVLVSARTGEHNFDTSLTMKEDWIRNGCDFLSTHW</sequence>
<dbReference type="EC" id="3.1.1.1" evidence="8"/>
<dbReference type="EMBL" id="KU946987">
    <property type="protein sequence ID" value="AMY15065.1"/>
    <property type="molecule type" value="Genomic_DNA"/>
</dbReference>
<dbReference type="SMR" id="A0A3G1DJF0"/>
<dbReference type="ESTHER" id="phosm-mfm8">
    <property type="family name" value="Hormone-sensitive_lipase_like"/>
</dbReference>
<dbReference type="GO" id="GO:0106435">
    <property type="term" value="F:carboxylesterase activity"/>
    <property type="evidence" value="ECO:0007669"/>
    <property type="project" value="UniProtKB-EC"/>
</dbReference>
<dbReference type="Gene3D" id="3.40.50.1820">
    <property type="entry name" value="alpha/beta hydrolase"/>
    <property type="match status" value="1"/>
</dbReference>
<dbReference type="InterPro" id="IPR013094">
    <property type="entry name" value="AB_hydrolase_3"/>
</dbReference>
<dbReference type="InterPro" id="IPR029058">
    <property type="entry name" value="AB_hydrolase_fold"/>
</dbReference>
<dbReference type="InterPro" id="IPR050466">
    <property type="entry name" value="Carboxylest/Gibb_receptor"/>
</dbReference>
<dbReference type="PANTHER" id="PTHR23024:SF24">
    <property type="entry name" value="ALPHA_BETA HYDROLASE FOLD-3 DOMAIN-CONTAINING PROTEIN"/>
    <property type="match status" value="1"/>
</dbReference>
<dbReference type="PANTHER" id="PTHR23024">
    <property type="entry name" value="ARYLACETAMIDE DEACETYLASE"/>
    <property type="match status" value="1"/>
</dbReference>
<dbReference type="Pfam" id="PF07859">
    <property type="entry name" value="Abhydrolase_3"/>
    <property type="match status" value="1"/>
</dbReference>
<dbReference type="SUPFAM" id="SSF53474">
    <property type="entry name" value="alpha/beta-Hydrolases"/>
    <property type="match status" value="1"/>
</dbReference>
<accession>A0A3G1DJF0</accession>